<sequence length="506" mass="54181">MPNEIFTINLNAQAIIPEAFILLGIVGTLLVDLAGEKTASKWAPIICYLSIGSSLFSLALQWSNPVNSAFLGSFNSDNLAIAFRAIIALSTLVSLLISWRYTEQSGSPIGEFAAIVLSATLGAMLLCGSTDLISIFISLETLSVASYLLSGYLKRDPRSSEAALKYLLVGSAAAAVYLYGSSFLYGLSGSTNLATIGLEIINKPSFITSLALVFVLSTVAFKIAAVPFHQWTPDVYEGSPTPVVAFLSVGSKTAGFAFAIRILSTTFSSFDEEWKLLFTILAILSMALGNVVALAQTSMKRMLAYSSIGQAGFVMIGIVSGTQDGLSATVLYLAAYLFMNLGAFSCVILFSLRTGSDRILDYSGLYQKDPLITLGLSLCLLSLGGLPPMLGFFGKIYLFFAGWANHQYLLVIIGLVTSVISIYYYISVIKMMVVKEPQEASEIVKSYPEINWGIVGMPPLRVALYTCVAVTALGGILSNPLFKLANTAVSETPFLQEIIAMANNIS</sequence>
<name>NU2C_PROM9</name>
<reference key="1">
    <citation type="journal article" date="2006" name="Science">
        <title>Genomic islands and the ecology and evolution of Prochlorococcus.</title>
        <authorList>
            <person name="Coleman M.L."/>
            <person name="Sullivan M.B."/>
            <person name="Martiny A.C."/>
            <person name="Steglich C."/>
            <person name="Barry K."/>
            <person name="Delong E.F."/>
            <person name="Chisholm S.W."/>
        </authorList>
    </citation>
    <scope>NUCLEOTIDE SEQUENCE [LARGE SCALE GENOMIC DNA]</scope>
    <source>
        <strain>MIT 9312</strain>
    </source>
</reference>
<accession>Q31CA0</accession>
<comment type="function">
    <text evidence="1">NDH-1 shuttles electrons from an unknown electron donor, via FMN and iron-sulfur (Fe-S) centers, to quinones in the respiratory and/or the photosynthetic chain. The immediate electron acceptor for the enzyme in this species is believed to be plastoquinone. Couples the redox reaction to proton translocation, and thus conserves the redox energy in a proton gradient. Cyanobacterial NDH-1 also plays a role in inorganic carbon-concentration.</text>
</comment>
<comment type="catalytic activity">
    <reaction evidence="1">
        <text>a plastoquinone + NADH + (n+1) H(+)(in) = a plastoquinol + NAD(+) + n H(+)(out)</text>
        <dbReference type="Rhea" id="RHEA:42608"/>
        <dbReference type="Rhea" id="RHEA-COMP:9561"/>
        <dbReference type="Rhea" id="RHEA-COMP:9562"/>
        <dbReference type="ChEBI" id="CHEBI:15378"/>
        <dbReference type="ChEBI" id="CHEBI:17757"/>
        <dbReference type="ChEBI" id="CHEBI:57540"/>
        <dbReference type="ChEBI" id="CHEBI:57945"/>
        <dbReference type="ChEBI" id="CHEBI:62192"/>
    </reaction>
</comment>
<comment type="catalytic activity">
    <reaction evidence="1">
        <text>a plastoquinone + NADPH + (n+1) H(+)(in) = a plastoquinol + NADP(+) + n H(+)(out)</text>
        <dbReference type="Rhea" id="RHEA:42612"/>
        <dbReference type="Rhea" id="RHEA-COMP:9561"/>
        <dbReference type="Rhea" id="RHEA-COMP:9562"/>
        <dbReference type="ChEBI" id="CHEBI:15378"/>
        <dbReference type="ChEBI" id="CHEBI:17757"/>
        <dbReference type="ChEBI" id="CHEBI:57783"/>
        <dbReference type="ChEBI" id="CHEBI:58349"/>
        <dbReference type="ChEBI" id="CHEBI:62192"/>
    </reaction>
</comment>
<comment type="subunit">
    <text evidence="1">NDH-1 can be composed of about 15 different subunits; different subcomplexes with different compositions have been identified which probably have different functions.</text>
</comment>
<comment type="subcellular location">
    <subcellularLocation>
        <location evidence="1">Cellular thylakoid membrane</location>
        <topology evidence="1">Multi-pass membrane protein</topology>
    </subcellularLocation>
</comment>
<comment type="similarity">
    <text evidence="1">Belongs to the complex I subunit 2 family.</text>
</comment>
<proteinExistence type="inferred from homology"/>
<evidence type="ECO:0000255" key="1">
    <source>
        <dbReference type="HAMAP-Rule" id="MF_00445"/>
    </source>
</evidence>
<feature type="chain" id="PRO_1000026153" description="NAD(P)H-quinone oxidoreductase subunit 2">
    <location>
        <begin position="1"/>
        <end position="506"/>
    </location>
</feature>
<feature type="transmembrane region" description="Helical" evidence="1">
    <location>
        <begin position="14"/>
        <end position="34"/>
    </location>
</feature>
<feature type="transmembrane region" description="Helical" evidence="1">
    <location>
        <begin position="42"/>
        <end position="62"/>
    </location>
</feature>
<feature type="transmembrane region" description="Helical" evidence="1">
    <location>
        <begin position="79"/>
        <end position="99"/>
    </location>
</feature>
<feature type="transmembrane region" description="Helical" evidence="1">
    <location>
        <begin position="108"/>
        <end position="128"/>
    </location>
</feature>
<feature type="transmembrane region" description="Helical" evidence="1">
    <location>
        <begin position="132"/>
        <end position="152"/>
    </location>
</feature>
<feature type="transmembrane region" description="Helical" evidence="1">
    <location>
        <begin position="167"/>
        <end position="187"/>
    </location>
</feature>
<feature type="transmembrane region" description="Helical" evidence="1">
    <location>
        <begin position="206"/>
        <end position="226"/>
    </location>
</feature>
<feature type="transmembrane region" description="Helical" evidence="1">
    <location>
        <begin position="240"/>
        <end position="260"/>
    </location>
</feature>
<feature type="transmembrane region" description="Helical" evidence="1">
    <location>
        <begin position="276"/>
        <end position="296"/>
    </location>
</feature>
<feature type="transmembrane region" description="Helical" evidence="1">
    <location>
        <begin position="302"/>
        <end position="322"/>
    </location>
</feature>
<feature type="transmembrane region" description="Helical" evidence="1">
    <location>
        <begin position="330"/>
        <end position="350"/>
    </location>
</feature>
<feature type="transmembrane region" description="Helical" evidence="1">
    <location>
        <begin position="374"/>
        <end position="394"/>
    </location>
</feature>
<feature type="transmembrane region" description="Helical" evidence="1">
    <location>
        <begin position="409"/>
        <end position="429"/>
    </location>
</feature>
<dbReference type="EC" id="7.1.1.-" evidence="1"/>
<dbReference type="EMBL" id="CP000111">
    <property type="protein sequence ID" value="ABB49495.1"/>
    <property type="molecule type" value="Genomic_DNA"/>
</dbReference>
<dbReference type="RefSeq" id="WP_011375994.1">
    <property type="nucleotide sequence ID" value="NC_007577.1"/>
</dbReference>
<dbReference type="SMR" id="Q31CA0"/>
<dbReference type="STRING" id="74546.PMT9312_0434"/>
<dbReference type="KEGG" id="pmi:PMT9312_0434"/>
<dbReference type="eggNOG" id="COG1007">
    <property type="taxonomic scope" value="Bacteria"/>
</dbReference>
<dbReference type="HOGENOM" id="CLU_007100_1_2_3"/>
<dbReference type="OrthoDB" id="9811718at2"/>
<dbReference type="Proteomes" id="UP000002715">
    <property type="component" value="Chromosome"/>
</dbReference>
<dbReference type="GO" id="GO:0031676">
    <property type="term" value="C:plasma membrane-derived thylakoid membrane"/>
    <property type="evidence" value="ECO:0007669"/>
    <property type="project" value="UniProtKB-SubCell"/>
</dbReference>
<dbReference type="GO" id="GO:0008137">
    <property type="term" value="F:NADH dehydrogenase (ubiquinone) activity"/>
    <property type="evidence" value="ECO:0007669"/>
    <property type="project" value="InterPro"/>
</dbReference>
<dbReference type="GO" id="GO:0048038">
    <property type="term" value="F:quinone binding"/>
    <property type="evidence" value="ECO:0007669"/>
    <property type="project" value="UniProtKB-KW"/>
</dbReference>
<dbReference type="GO" id="GO:0042773">
    <property type="term" value="P:ATP synthesis coupled electron transport"/>
    <property type="evidence" value="ECO:0007669"/>
    <property type="project" value="InterPro"/>
</dbReference>
<dbReference type="GO" id="GO:0019684">
    <property type="term" value="P:photosynthesis, light reaction"/>
    <property type="evidence" value="ECO:0007669"/>
    <property type="project" value="UniProtKB-UniRule"/>
</dbReference>
<dbReference type="HAMAP" id="MF_00445">
    <property type="entry name" value="NDH1_NuoN_1"/>
    <property type="match status" value="1"/>
</dbReference>
<dbReference type="InterPro" id="IPR010096">
    <property type="entry name" value="NADH-Q_OxRdtase_suN/2"/>
</dbReference>
<dbReference type="InterPro" id="IPR001750">
    <property type="entry name" value="ND/Mrp_TM"/>
</dbReference>
<dbReference type="NCBIfam" id="TIGR01770">
    <property type="entry name" value="NDH_I_N"/>
    <property type="match status" value="1"/>
</dbReference>
<dbReference type="NCBIfam" id="NF002701">
    <property type="entry name" value="PRK02504.1"/>
    <property type="match status" value="1"/>
</dbReference>
<dbReference type="PANTHER" id="PTHR22773">
    <property type="entry name" value="NADH DEHYDROGENASE"/>
    <property type="match status" value="1"/>
</dbReference>
<dbReference type="Pfam" id="PF00361">
    <property type="entry name" value="Proton_antipo_M"/>
    <property type="match status" value="1"/>
</dbReference>
<gene>
    <name evidence="1" type="primary">ndhB</name>
    <name type="ordered locus">PMT9312_0434</name>
</gene>
<protein>
    <recommendedName>
        <fullName evidence="1">NAD(P)H-quinone oxidoreductase subunit 2</fullName>
        <ecNumber evidence="1">7.1.1.-</ecNumber>
    </recommendedName>
    <alternativeName>
        <fullName evidence="1">NAD(P)H dehydrogenase subunit 2</fullName>
    </alternativeName>
    <alternativeName>
        <fullName evidence="1">NADH-plastoquinone oxidoreductase subunit 2</fullName>
    </alternativeName>
    <alternativeName>
        <fullName evidence="1">NDH-1, subunit 2</fullName>
    </alternativeName>
</protein>
<keyword id="KW-0472">Membrane</keyword>
<keyword id="KW-0520">NAD</keyword>
<keyword id="KW-0521">NADP</keyword>
<keyword id="KW-0618">Plastoquinone</keyword>
<keyword id="KW-0874">Quinone</keyword>
<keyword id="KW-0793">Thylakoid</keyword>
<keyword id="KW-1278">Translocase</keyword>
<keyword id="KW-0812">Transmembrane</keyword>
<keyword id="KW-1133">Transmembrane helix</keyword>
<keyword id="KW-0813">Transport</keyword>
<organism>
    <name type="scientific">Prochlorococcus marinus (strain MIT 9312)</name>
    <dbReference type="NCBI Taxonomy" id="74546"/>
    <lineage>
        <taxon>Bacteria</taxon>
        <taxon>Bacillati</taxon>
        <taxon>Cyanobacteriota</taxon>
        <taxon>Cyanophyceae</taxon>
        <taxon>Synechococcales</taxon>
        <taxon>Prochlorococcaceae</taxon>
        <taxon>Prochlorococcus</taxon>
    </lineage>
</organism>